<keyword id="KW-1185">Reference proteome</keyword>
<evidence type="ECO:0000255" key="1">
    <source>
        <dbReference type="PROSITE-ProRule" id="PRU00116"/>
    </source>
</evidence>
<evidence type="ECO:0000256" key="2">
    <source>
        <dbReference type="SAM" id="MobiDB-lite"/>
    </source>
</evidence>
<evidence type="ECO:0000305" key="3"/>
<evidence type="ECO:0000312" key="4">
    <source>
        <dbReference type="HGNC" id="HGNC:53443"/>
    </source>
</evidence>
<organism>
    <name type="scientific">Homo sapiens</name>
    <name type="common">Human</name>
    <dbReference type="NCBI Taxonomy" id="9606"/>
    <lineage>
        <taxon>Eukaryota</taxon>
        <taxon>Metazoa</taxon>
        <taxon>Chordata</taxon>
        <taxon>Craniata</taxon>
        <taxon>Vertebrata</taxon>
        <taxon>Euteleostomi</taxon>
        <taxon>Mammalia</taxon>
        <taxon>Eutheria</taxon>
        <taxon>Euarchontoglires</taxon>
        <taxon>Primates</taxon>
        <taxon>Haplorrhini</taxon>
        <taxon>Catarrhini</taxon>
        <taxon>Hominidae</taxon>
        <taxon>Homo</taxon>
    </lineage>
</organism>
<sequence length="501" mass="59586">MTTEEAMPEKAKCPTLEITKQDFFQEAKTLIAQHYEKINENKVQGTSINVFRKKHQKPKSGKYIPLEIDKKVTRDVVQEHRAALRRICFPKELSKSEHLQEPPQRISFKEPHIFSRRERCRPIDLITKGQVKLDKIMTIIEPVSKKMETAKQQHFEESRNRMLELLYPFPVHLYLQPGTSNLELLKEPDKAFYDWRGFVLTRSFRLACDSRRVSFSQSSSIFRDYYSKTFKTLIKKERQPIKPEPKSQPRIKGTPNKTDKLDSKVKRIGPHIEIFQVFRERKKFMITPKLIRMVTVMQAHVRGWLERKRLQRVMTKALDHGPDMKAVINMYGRLIHRVRYRRGLWRTRQILNLAELEEWMDRKKFYEIMFAKREDWPKIERNELPNFFSDCGHFPTQKQVDDTWDLVHQDGKEKYSELIKKSKAIEMLFTLYPPEGAHVPDSTLLKSTWLRPIVNGEEGYRYIVNGHPALKRANIRVVGKLVARSIRERKMRQHYKSCKVE</sequence>
<reference key="1">
    <citation type="journal article" date="2005" name="Nature">
        <title>Generation and annotation of the DNA sequences of human chromosomes 2 and 4.</title>
        <authorList>
            <person name="Hillier L.W."/>
            <person name="Graves T.A."/>
            <person name="Fulton R.S."/>
            <person name="Fulton L.A."/>
            <person name="Pepin K.H."/>
            <person name="Minx P."/>
            <person name="Wagner-McPherson C."/>
            <person name="Layman D."/>
            <person name="Wylie K."/>
            <person name="Sekhon M."/>
            <person name="Becker M.C."/>
            <person name="Fewell G.A."/>
            <person name="Delehaunty K.D."/>
            <person name="Miner T.L."/>
            <person name="Nash W.E."/>
            <person name="Kremitzki C."/>
            <person name="Oddy L."/>
            <person name="Du H."/>
            <person name="Sun H."/>
            <person name="Bradshaw-Cordum H."/>
            <person name="Ali J."/>
            <person name="Carter J."/>
            <person name="Cordes M."/>
            <person name="Harris A."/>
            <person name="Isak A."/>
            <person name="van Brunt A."/>
            <person name="Nguyen C."/>
            <person name="Du F."/>
            <person name="Courtney L."/>
            <person name="Kalicki J."/>
            <person name="Ozersky P."/>
            <person name="Abbott S."/>
            <person name="Armstrong J."/>
            <person name="Belter E.A."/>
            <person name="Caruso L."/>
            <person name="Cedroni M."/>
            <person name="Cotton M."/>
            <person name="Davidson T."/>
            <person name="Desai A."/>
            <person name="Elliott G."/>
            <person name="Erb T."/>
            <person name="Fronick C."/>
            <person name="Gaige T."/>
            <person name="Haakenson W."/>
            <person name="Haglund K."/>
            <person name="Holmes A."/>
            <person name="Harkins R."/>
            <person name="Kim K."/>
            <person name="Kruchowski S.S."/>
            <person name="Strong C.M."/>
            <person name="Grewal N."/>
            <person name="Goyea E."/>
            <person name="Hou S."/>
            <person name="Levy A."/>
            <person name="Martinka S."/>
            <person name="Mead K."/>
            <person name="McLellan M.D."/>
            <person name="Meyer R."/>
            <person name="Randall-Maher J."/>
            <person name="Tomlinson C."/>
            <person name="Dauphin-Kohlberg S."/>
            <person name="Kozlowicz-Reilly A."/>
            <person name="Shah N."/>
            <person name="Swearengen-Shahid S."/>
            <person name="Snider J."/>
            <person name="Strong J.T."/>
            <person name="Thompson J."/>
            <person name="Yoakum M."/>
            <person name="Leonard S."/>
            <person name="Pearman C."/>
            <person name="Trani L."/>
            <person name="Radionenko M."/>
            <person name="Waligorski J.E."/>
            <person name="Wang C."/>
            <person name="Rock S.M."/>
            <person name="Tin-Wollam A.-M."/>
            <person name="Maupin R."/>
            <person name="Latreille P."/>
            <person name="Wendl M.C."/>
            <person name="Yang S.-P."/>
            <person name="Pohl C."/>
            <person name="Wallis J.W."/>
            <person name="Spieth J."/>
            <person name="Bieri T.A."/>
            <person name="Berkowicz N."/>
            <person name="Nelson J.O."/>
            <person name="Osborne J."/>
            <person name="Ding L."/>
            <person name="Meyer R."/>
            <person name="Sabo A."/>
            <person name="Shotland Y."/>
            <person name="Sinha P."/>
            <person name="Wohldmann P.E."/>
            <person name="Cook L.L."/>
            <person name="Hickenbotham M.T."/>
            <person name="Eldred J."/>
            <person name="Williams D."/>
            <person name="Jones T.A."/>
            <person name="She X."/>
            <person name="Ciccarelli F.D."/>
            <person name="Izaurralde E."/>
            <person name="Taylor J."/>
            <person name="Schmutz J."/>
            <person name="Myers R.M."/>
            <person name="Cox D.R."/>
            <person name="Huang X."/>
            <person name="McPherson J.D."/>
            <person name="Mardis E.R."/>
            <person name="Clifton S.W."/>
            <person name="Warren W.C."/>
            <person name="Chinwalla A.T."/>
            <person name="Eddy S.R."/>
            <person name="Marra M.A."/>
            <person name="Ovcharenko I."/>
            <person name="Furey T.S."/>
            <person name="Miller W."/>
            <person name="Eichler E.E."/>
            <person name="Bork P."/>
            <person name="Suyama M."/>
            <person name="Torrents D."/>
            <person name="Waterston R.H."/>
            <person name="Wilson R.K."/>
        </authorList>
    </citation>
    <scope>NUCLEOTIDE SEQUENCE [LARGE SCALE GENOMIC DNA]</scope>
</reference>
<gene>
    <name evidence="4" type="primary">IQCM</name>
</gene>
<accession>A0A1B0GVH7</accession>
<feature type="chain" id="PRO_0000441625" description="IQ domain-containing protein M">
    <location>
        <begin position="1"/>
        <end position="501"/>
    </location>
</feature>
<feature type="domain" description="IQ" evidence="1">
    <location>
        <begin position="290"/>
        <end position="319"/>
    </location>
</feature>
<feature type="region of interest" description="Disordered" evidence="2">
    <location>
        <begin position="237"/>
        <end position="262"/>
    </location>
</feature>
<feature type="compositionally biased region" description="Basic and acidic residues" evidence="2">
    <location>
        <begin position="237"/>
        <end position="247"/>
    </location>
</feature>
<proteinExistence type="predicted"/>
<name>IQCM_HUMAN</name>
<protein>
    <recommendedName>
        <fullName evidence="3">IQ domain-containing protein M</fullName>
    </recommendedName>
</protein>
<dbReference type="EMBL" id="AC027058">
    <property type="status" value="NOT_ANNOTATED_CDS"/>
    <property type="molecule type" value="Genomic_DNA"/>
</dbReference>
<dbReference type="EMBL" id="AC093893">
    <property type="status" value="NOT_ANNOTATED_CDS"/>
    <property type="molecule type" value="Genomic_DNA"/>
</dbReference>
<dbReference type="EMBL" id="AC096756">
    <property type="status" value="NOT_ANNOTATED_CDS"/>
    <property type="molecule type" value="Genomic_DNA"/>
</dbReference>
<dbReference type="EMBL" id="AC097465">
    <property type="status" value="NOT_ANNOTATED_CDS"/>
    <property type="molecule type" value="Genomic_DNA"/>
</dbReference>
<dbReference type="EMBL" id="AC108168">
    <property type="status" value="NOT_ANNOTATED_CDS"/>
    <property type="molecule type" value="Genomic_DNA"/>
</dbReference>
<dbReference type="EMBL" id="AC108932">
    <property type="status" value="NOT_ANNOTATED_CDS"/>
    <property type="molecule type" value="Genomic_DNA"/>
</dbReference>
<dbReference type="CCDS" id="CCDS87270.1"/>
<dbReference type="RefSeq" id="NP_001350436.1">
    <property type="nucleotide sequence ID" value="NM_001363507.2"/>
</dbReference>
<dbReference type="RefSeq" id="XP_016864392.1">
    <property type="nucleotide sequence ID" value="XM_017008903.3"/>
</dbReference>
<dbReference type="RefSeq" id="XP_016883815.1">
    <property type="nucleotide sequence ID" value="XM_017028326.1"/>
</dbReference>
<dbReference type="RefSeq" id="XP_054205681.1">
    <property type="nucleotide sequence ID" value="XM_054349706.1"/>
</dbReference>
<dbReference type="STRING" id="9606.ENSP00000490518"/>
<dbReference type="BioMuta" id="IQCM"/>
<dbReference type="MassIVE" id="A0A1B0GVH7"/>
<dbReference type="PeptideAtlas" id="A0A1B0GVH7"/>
<dbReference type="DNASU" id="285423"/>
<dbReference type="Ensembl" id="ENST00000636793.2">
    <property type="protein sequence ID" value="ENSP00000490518.1"/>
    <property type="gene ID" value="ENSG00000234828.9"/>
</dbReference>
<dbReference type="GeneID" id="285423"/>
<dbReference type="MANE-Select" id="ENST00000636793.2">
    <property type="protein sequence ID" value="ENSP00000490518.1"/>
    <property type="RefSeq nucleotide sequence ID" value="NM_001363507.2"/>
    <property type="RefSeq protein sequence ID" value="NP_001350436.1"/>
</dbReference>
<dbReference type="AGR" id="HGNC:53443"/>
<dbReference type="CTD" id="285423"/>
<dbReference type="DisGeNET" id="285423"/>
<dbReference type="GeneCards" id="IQCM"/>
<dbReference type="HGNC" id="HGNC:53443">
    <property type="gene designation" value="IQCM"/>
</dbReference>
<dbReference type="HPA" id="ENSG00000234828">
    <property type="expression patterns" value="Tissue enriched (testis)"/>
</dbReference>
<dbReference type="neXtProt" id="NX_A0A1B0GVH7"/>
<dbReference type="OpenTargets" id="ENSG00000234828"/>
<dbReference type="VEuPathDB" id="HostDB:ENSG00000234828"/>
<dbReference type="GeneTree" id="ENSGT00390000010038"/>
<dbReference type="InParanoid" id="A0A1B0GVH7"/>
<dbReference type="OMA" id="KMRQHYK"/>
<dbReference type="OrthoDB" id="6288272at2759"/>
<dbReference type="PAN-GO" id="A0A1B0GVH7">
    <property type="GO annotations" value="0 GO annotations based on evolutionary models"/>
</dbReference>
<dbReference type="PathwayCommons" id="A0A1B0GVH7"/>
<dbReference type="SignaLink" id="A0A1B0GVH7"/>
<dbReference type="BioGRID-ORCS" id="285423">
    <property type="hits" value="0 hits in 25 CRISPR screens"/>
</dbReference>
<dbReference type="GenomeRNAi" id="285423"/>
<dbReference type="Pharos" id="A0A1B0GVH7">
    <property type="development level" value="Tdark"/>
</dbReference>
<dbReference type="PRO" id="PR:A0A1B0GVH7"/>
<dbReference type="Proteomes" id="UP000005640">
    <property type="component" value="Chromosome 4"/>
</dbReference>
<dbReference type="RNAct" id="A0A1B0GVH7">
    <property type="molecule type" value="protein"/>
</dbReference>
<dbReference type="Bgee" id="ENSG00000234828">
    <property type="expression patterns" value="Expressed in male germ line stem cell (sensu Vertebrata) in testis and 23 other cell types or tissues"/>
</dbReference>
<dbReference type="ExpressionAtlas" id="A0A1B0GVH7">
    <property type="expression patterns" value="baseline and differential"/>
</dbReference>
<dbReference type="InterPro" id="IPR000048">
    <property type="entry name" value="IQ_motif_EF-hand-BS"/>
</dbReference>
<dbReference type="PANTHER" id="PTHR35978">
    <property type="entry name" value="IQ DOMAIN-CONTAINING PROTEIN M"/>
    <property type="match status" value="1"/>
</dbReference>
<dbReference type="PANTHER" id="PTHR35978:SF1">
    <property type="entry name" value="IQ DOMAIN-CONTAINING PROTEIN M"/>
    <property type="match status" value="1"/>
</dbReference>
<dbReference type="SMART" id="SM00015">
    <property type="entry name" value="IQ"/>
    <property type="match status" value="1"/>
</dbReference>
<dbReference type="PROSITE" id="PS50096">
    <property type="entry name" value="IQ"/>
    <property type="match status" value="1"/>
</dbReference>